<reference key="1">
    <citation type="journal article" date="2008" name="Antimicrob. Agents Chemother.">
        <title>Mutated response regulator graR is responsible for phenotypic conversion of Staphylococcus aureus from heterogeneous vancomycin-intermediate resistance to vancomycin-intermediate resistance.</title>
        <authorList>
            <person name="Neoh H.-M."/>
            <person name="Cui L."/>
            <person name="Yuzawa H."/>
            <person name="Takeuchi F."/>
            <person name="Matsuo M."/>
            <person name="Hiramatsu K."/>
        </authorList>
    </citation>
    <scope>NUCLEOTIDE SEQUENCE [LARGE SCALE GENOMIC DNA]</scope>
    <source>
        <strain>Mu3 / ATCC 700698</strain>
    </source>
</reference>
<keyword id="KW-0028">Amino-acid biosynthesis</keyword>
<keyword id="KW-0057">Aromatic amino acid biosynthesis</keyword>
<keyword id="KW-0521">NADP</keyword>
<keyword id="KW-0560">Oxidoreductase</keyword>
<dbReference type="EC" id="1.1.1.25" evidence="1"/>
<dbReference type="EMBL" id="AP009324">
    <property type="protein sequence ID" value="BAF78466.1"/>
    <property type="molecule type" value="Genomic_DNA"/>
</dbReference>
<dbReference type="RefSeq" id="WP_000666757.1">
    <property type="nucleotide sequence ID" value="NC_009782.1"/>
</dbReference>
<dbReference type="SMR" id="A7X302"/>
<dbReference type="KEGG" id="saw:SAHV_1583"/>
<dbReference type="HOGENOM" id="CLU_044063_4_1_9"/>
<dbReference type="UniPathway" id="UPA00053">
    <property type="reaction ID" value="UER00087"/>
</dbReference>
<dbReference type="GO" id="GO:0005829">
    <property type="term" value="C:cytosol"/>
    <property type="evidence" value="ECO:0007669"/>
    <property type="project" value="TreeGrafter"/>
</dbReference>
<dbReference type="GO" id="GO:0050661">
    <property type="term" value="F:NADP binding"/>
    <property type="evidence" value="ECO:0007669"/>
    <property type="project" value="InterPro"/>
</dbReference>
<dbReference type="GO" id="GO:0004764">
    <property type="term" value="F:shikimate 3-dehydrogenase (NADP+) activity"/>
    <property type="evidence" value="ECO:0007669"/>
    <property type="project" value="UniProtKB-UniRule"/>
</dbReference>
<dbReference type="GO" id="GO:0008652">
    <property type="term" value="P:amino acid biosynthetic process"/>
    <property type="evidence" value="ECO:0007669"/>
    <property type="project" value="UniProtKB-KW"/>
</dbReference>
<dbReference type="GO" id="GO:0009073">
    <property type="term" value="P:aromatic amino acid family biosynthetic process"/>
    <property type="evidence" value="ECO:0007669"/>
    <property type="project" value="UniProtKB-KW"/>
</dbReference>
<dbReference type="GO" id="GO:0009423">
    <property type="term" value="P:chorismate biosynthetic process"/>
    <property type="evidence" value="ECO:0007669"/>
    <property type="project" value="UniProtKB-UniRule"/>
</dbReference>
<dbReference type="GO" id="GO:0019632">
    <property type="term" value="P:shikimate metabolic process"/>
    <property type="evidence" value="ECO:0007669"/>
    <property type="project" value="InterPro"/>
</dbReference>
<dbReference type="CDD" id="cd01065">
    <property type="entry name" value="NAD_bind_Shikimate_DH"/>
    <property type="match status" value="1"/>
</dbReference>
<dbReference type="FunFam" id="3.40.50.10860:FF:000016">
    <property type="entry name" value="Shikimate dehydrogenase (NADP(+))"/>
    <property type="match status" value="1"/>
</dbReference>
<dbReference type="FunFam" id="3.40.50.720:FF:000445">
    <property type="entry name" value="Shikimate dehydrogenase (NADP(+))"/>
    <property type="match status" value="1"/>
</dbReference>
<dbReference type="Gene3D" id="3.40.50.10860">
    <property type="entry name" value="Leucine Dehydrogenase, chain A, domain 1"/>
    <property type="match status" value="1"/>
</dbReference>
<dbReference type="Gene3D" id="3.40.50.720">
    <property type="entry name" value="NAD(P)-binding Rossmann-like Domain"/>
    <property type="match status" value="1"/>
</dbReference>
<dbReference type="HAMAP" id="MF_00222">
    <property type="entry name" value="Shikimate_DH_AroE"/>
    <property type="match status" value="1"/>
</dbReference>
<dbReference type="InterPro" id="IPR046346">
    <property type="entry name" value="Aminoacid_DH-like_N_sf"/>
</dbReference>
<dbReference type="InterPro" id="IPR036291">
    <property type="entry name" value="NAD(P)-bd_dom_sf"/>
</dbReference>
<dbReference type="InterPro" id="IPR041121">
    <property type="entry name" value="SDH_C"/>
</dbReference>
<dbReference type="InterPro" id="IPR011342">
    <property type="entry name" value="Shikimate_DH"/>
</dbReference>
<dbReference type="InterPro" id="IPR013708">
    <property type="entry name" value="Shikimate_DH-bd_N"/>
</dbReference>
<dbReference type="InterPro" id="IPR022893">
    <property type="entry name" value="Shikimate_DH_fam"/>
</dbReference>
<dbReference type="InterPro" id="IPR006151">
    <property type="entry name" value="Shikm_DH/Glu-tRNA_Rdtase"/>
</dbReference>
<dbReference type="NCBIfam" id="TIGR00507">
    <property type="entry name" value="aroE"/>
    <property type="match status" value="1"/>
</dbReference>
<dbReference type="PANTHER" id="PTHR21089:SF1">
    <property type="entry name" value="BIFUNCTIONAL 3-DEHYDROQUINATE DEHYDRATASE_SHIKIMATE DEHYDROGENASE, CHLOROPLASTIC"/>
    <property type="match status" value="1"/>
</dbReference>
<dbReference type="PANTHER" id="PTHR21089">
    <property type="entry name" value="SHIKIMATE DEHYDROGENASE"/>
    <property type="match status" value="1"/>
</dbReference>
<dbReference type="Pfam" id="PF18317">
    <property type="entry name" value="SDH_C"/>
    <property type="match status" value="1"/>
</dbReference>
<dbReference type="Pfam" id="PF01488">
    <property type="entry name" value="Shikimate_DH"/>
    <property type="match status" value="1"/>
</dbReference>
<dbReference type="Pfam" id="PF08501">
    <property type="entry name" value="Shikimate_dh_N"/>
    <property type="match status" value="1"/>
</dbReference>
<dbReference type="SUPFAM" id="SSF53223">
    <property type="entry name" value="Aminoacid dehydrogenase-like, N-terminal domain"/>
    <property type="match status" value="1"/>
</dbReference>
<dbReference type="SUPFAM" id="SSF51735">
    <property type="entry name" value="NAD(P)-binding Rossmann-fold domains"/>
    <property type="match status" value="1"/>
</dbReference>
<feature type="chain" id="PRO_1000021338" description="Shikimate dehydrogenase (NADP(+))">
    <location>
        <begin position="1"/>
        <end position="268"/>
    </location>
</feature>
<feature type="active site" description="Proton acceptor" evidence="1">
    <location>
        <position position="64"/>
    </location>
</feature>
<feature type="binding site" evidence="1">
    <location>
        <begin position="13"/>
        <end position="15"/>
    </location>
    <ligand>
        <name>shikimate</name>
        <dbReference type="ChEBI" id="CHEBI:36208"/>
    </ligand>
</feature>
<feature type="binding site" evidence="1">
    <location>
        <position position="60"/>
    </location>
    <ligand>
        <name>shikimate</name>
        <dbReference type="ChEBI" id="CHEBI:36208"/>
    </ligand>
</feature>
<feature type="binding site" evidence="1">
    <location>
        <position position="76"/>
    </location>
    <ligand>
        <name>NADP(+)</name>
        <dbReference type="ChEBI" id="CHEBI:58349"/>
    </ligand>
</feature>
<feature type="binding site" evidence="1">
    <location>
        <position position="85"/>
    </location>
    <ligand>
        <name>shikimate</name>
        <dbReference type="ChEBI" id="CHEBI:36208"/>
    </ligand>
</feature>
<feature type="binding site" evidence="1">
    <location>
        <position position="100"/>
    </location>
    <ligand>
        <name>shikimate</name>
        <dbReference type="ChEBI" id="CHEBI:36208"/>
    </ligand>
</feature>
<feature type="binding site" evidence="1">
    <location>
        <begin position="124"/>
        <end position="128"/>
    </location>
    <ligand>
        <name>NADP(+)</name>
        <dbReference type="ChEBI" id="CHEBI:58349"/>
    </ligand>
</feature>
<feature type="binding site" evidence="1">
    <location>
        <begin position="148"/>
        <end position="153"/>
    </location>
    <ligand>
        <name>NADP(+)</name>
        <dbReference type="ChEBI" id="CHEBI:58349"/>
    </ligand>
</feature>
<feature type="binding site" evidence="1">
    <location>
        <position position="209"/>
    </location>
    <ligand>
        <name>NADP(+)</name>
        <dbReference type="ChEBI" id="CHEBI:58349"/>
    </ligand>
</feature>
<feature type="binding site" evidence="1">
    <location>
        <position position="211"/>
    </location>
    <ligand>
        <name>shikimate</name>
        <dbReference type="ChEBI" id="CHEBI:36208"/>
    </ligand>
</feature>
<feature type="binding site" evidence="1">
    <location>
        <position position="232"/>
    </location>
    <ligand>
        <name>NADP(+)</name>
        <dbReference type="ChEBI" id="CHEBI:58349"/>
    </ligand>
</feature>
<accession>A7X302</accession>
<gene>
    <name evidence="1" type="primary">aroE</name>
    <name type="ordered locus">SAHV_1583</name>
</gene>
<organism>
    <name type="scientific">Staphylococcus aureus (strain Mu3 / ATCC 700698)</name>
    <dbReference type="NCBI Taxonomy" id="418127"/>
    <lineage>
        <taxon>Bacteria</taxon>
        <taxon>Bacillati</taxon>
        <taxon>Bacillota</taxon>
        <taxon>Bacilli</taxon>
        <taxon>Bacillales</taxon>
        <taxon>Staphylococcaceae</taxon>
        <taxon>Staphylococcus</taxon>
    </lineage>
</organism>
<evidence type="ECO:0000255" key="1">
    <source>
        <dbReference type="HAMAP-Rule" id="MF_00222"/>
    </source>
</evidence>
<sequence length="268" mass="29865">MKFAVIGNPISHSLSPVMHRANFNSLGLDDTYEALNIPIEDFHLIKEIISKKELDGFNITIPHKERIIPYLDYVDEQAINAGAVNTVLIKDGKWIGYNTDGIGYVKGLHSVYPDLENAYILILGAGGASKGIAYELAKFVKPKLTVANRTMARFESWNLNINQISLADAEKYLAEFDIVINTTPAGMAGNNESIINLKHLSPNTLMSDIVYIPYKTPILEEAERKGNHIYNGLDMFVYQGAESFKIWTNKDADINSMKTAVLQQLKGE</sequence>
<comment type="function">
    <text evidence="1">Involved in the biosynthesis of the chorismate, which leads to the biosynthesis of aromatic amino acids. Catalyzes the reversible NADPH linked reduction of 3-dehydroshikimate (DHSA) to yield shikimate (SA).</text>
</comment>
<comment type="catalytic activity">
    <reaction evidence="1">
        <text>shikimate + NADP(+) = 3-dehydroshikimate + NADPH + H(+)</text>
        <dbReference type="Rhea" id="RHEA:17737"/>
        <dbReference type="ChEBI" id="CHEBI:15378"/>
        <dbReference type="ChEBI" id="CHEBI:16630"/>
        <dbReference type="ChEBI" id="CHEBI:36208"/>
        <dbReference type="ChEBI" id="CHEBI:57783"/>
        <dbReference type="ChEBI" id="CHEBI:58349"/>
        <dbReference type="EC" id="1.1.1.25"/>
    </reaction>
</comment>
<comment type="pathway">
    <text evidence="1">Metabolic intermediate biosynthesis; chorismate biosynthesis; chorismate from D-erythrose 4-phosphate and phosphoenolpyruvate: step 4/7.</text>
</comment>
<comment type="subunit">
    <text evidence="1">Homodimer.</text>
</comment>
<comment type="similarity">
    <text evidence="1">Belongs to the shikimate dehydrogenase family.</text>
</comment>
<name>AROE_STAA1</name>
<proteinExistence type="inferred from homology"/>
<protein>
    <recommendedName>
        <fullName evidence="1">Shikimate dehydrogenase (NADP(+))</fullName>
        <shortName evidence="1">SDH</shortName>
        <ecNumber evidence="1">1.1.1.25</ecNumber>
    </recommendedName>
</protein>